<reference key="1">
    <citation type="journal article" date="1991" name="DNA Cell Biol.">
        <title>A bradykinin-like neuropeptide precursor gene is expressed in neuron L5 of Aplysia californica.</title>
        <authorList>
            <person name="Wickham L."/>
            <person name="Desgroseillers L."/>
        </authorList>
    </citation>
    <scope>NUCLEOTIDE SEQUENCE [MRNA]</scope>
</reference>
<dbReference type="EMBL" id="M37887">
    <property type="protein sequence ID" value="AAA27757.1"/>
    <property type="molecule type" value="mRNA"/>
</dbReference>
<dbReference type="PIR" id="A40575">
    <property type="entry name" value="A40575"/>
</dbReference>
<dbReference type="RefSeq" id="NP_001191477.1">
    <property type="nucleotide sequence ID" value="NM_001204548.1"/>
</dbReference>
<dbReference type="EnsemblMetazoa" id="NM_001204548.1">
    <property type="protein sequence ID" value="NP_001191477.1"/>
    <property type="gene ID" value="GeneID_100533235"/>
</dbReference>
<dbReference type="GeneID" id="100533235"/>
<dbReference type="CTD" id="100533235"/>
<dbReference type="OrthoDB" id="6161317at2759"/>
<dbReference type="Proteomes" id="UP000694888">
    <property type="component" value="Unplaced"/>
</dbReference>
<dbReference type="GO" id="GO:0005576">
    <property type="term" value="C:extracellular region"/>
    <property type="evidence" value="ECO:0007669"/>
    <property type="project" value="UniProtKB-SubCell"/>
</dbReference>
<dbReference type="GO" id="GO:0007218">
    <property type="term" value="P:neuropeptide signaling pathway"/>
    <property type="evidence" value="ECO:0007669"/>
    <property type="project" value="UniProtKB-KW"/>
</dbReference>
<name>LUQ1_APLCA</name>
<evidence type="ECO:0000255" key="1"/>
<accession>Q00676</accession>
<protein>
    <recommendedName>
        <fullName>Bradykinin-like neuropeptide</fullName>
    </recommendedName>
</protein>
<gene>
    <name type="primary">LUQ-1</name>
</gene>
<feature type="signal peptide" evidence="1">
    <location>
        <begin position="1"/>
        <end position="24"/>
    </location>
</feature>
<feature type="propeptide" id="PRO_0000001924">
    <location>
        <begin position="25"/>
        <end position="80"/>
    </location>
</feature>
<feature type="peptide" id="PRO_0000001925" description="Bradykinin-like neuropeptide">
    <location>
        <begin position="81"/>
        <end position="91"/>
    </location>
</feature>
<feature type="propeptide" id="PRO_0000001926">
    <location>
        <begin position="92"/>
        <end position="146"/>
    </location>
</feature>
<sequence>MTSSIYGFITLSVVALISQTTCRSLDLLLDGDFNNGLASFDGSSKWSRLPLEFLAAFDLDPHQAQGQHLAEAPEAPLMEAMKRSRGPSPRRLRSYLRRAAGLRGMKRKMFWQPLGYMPASARAHNNVPEVVNENSQDSGTNVFRYG</sequence>
<comment type="function">
    <text>May have important functions in renal physiology and in animal behavior, as does bradykinin.</text>
</comment>
<comment type="subcellular location">
    <subcellularLocation>
        <location>Secreted</location>
    </subcellularLocation>
</comment>
<comment type="tissue specificity">
    <text>Neuron L5.</text>
</comment>
<organism>
    <name type="scientific">Aplysia californica</name>
    <name type="common">California sea hare</name>
    <dbReference type="NCBI Taxonomy" id="6500"/>
    <lineage>
        <taxon>Eukaryota</taxon>
        <taxon>Metazoa</taxon>
        <taxon>Spiralia</taxon>
        <taxon>Lophotrochozoa</taxon>
        <taxon>Mollusca</taxon>
        <taxon>Gastropoda</taxon>
        <taxon>Heterobranchia</taxon>
        <taxon>Euthyneura</taxon>
        <taxon>Tectipleura</taxon>
        <taxon>Aplysiida</taxon>
        <taxon>Aplysioidea</taxon>
        <taxon>Aplysiidae</taxon>
        <taxon>Aplysia</taxon>
    </lineage>
</organism>
<keyword id="KW-0165">Cleavage on pair of basic residues</keyword>
<keyword id="KW-0527">Neuropeptide</keyword>
<keyword id="KW-0964">Secreted</keyword>
<keyword id="KW-0732">Signal</keyword>
<proteinExistence type="evidence at transcript level"/>